<feature type="chain" id="PRO_0000203057" description="Protein DLS1">
    <location>
        <begin position="1"/>
        <end position="167"/>
    </location>
</feature>
<feature type="modified residue" description="Phosphoserine" evidence="9">
    <location>
        <position position="17"/>
    </location>
</feature>
<reference key="1">
    <citation type="journal article" date="1995" name="Yeast">
        <title>Sequence of a 17.1 kb DNA fragment from chromosome X of Saccharomyces cerevisiae includes the mitochondrial ribosomal protein L8.</title>
        <authorList>
            <person name="Vandenbol M."/>
            <person name="Durand P."/>
            <person name="Dion C."/>
            <person name="Portetelle D."/>
            <person name="Hilger F."/>
        </authorList>
    </citation>
    <scope>NUCLEOTIDE SEQUENCE [GENOMIC DNA]</scope>
    <source>
        <strain>ATCC 204508 / S288c</strain>
    </source>
</reference>
<reference key="2">
    <citation type="journal article" date="1996" name="EMBO J.">
        <title>Complete nucleotide sequence of Saccharomyces cerevisiae chromosome X.</title>
        <authorList>
            <person name="Galibert F."/>
            <person name="Alexandraki D."/>
            <person name="Baur A."/>
            <person name="Boles E."/>
            <person name="Chalwatzis N."/>
            <person name="Chuat J.-C."/>
            <person name="Coster F."/>
            <person name="Cziepluch C."/>
            <person name="de Haan M."/>
            <person name="Domdey H."/>
            <person name="Durand P."/>
            <person name="Entian K.-D."/>
            <person name="Gatius M."/>
            <person name="Goffeau A."/>
            <person name="Grivell L.A."/>
            <person name="Hennemann A."/>
            <person name="Herbert C.J."/>
            <person name="Heumann K."/>
            <person name="Hilger F."/>
            <person name="Hollenberg C.P."/>
            <person name="Huang M.-E."/>
            <person name="Jacq C."/>
            <person name="Jauniaux J.-C."/>
            <person name="Katsoulou C."/>
            <person name="Kirchrath L."/>
            <person name="Kleine K."/>
            <person name="Kordes E."/>
            <person name="Koetter P."/>
            <person name="Liebl S."/>
            <person name="Louis E.J."/>
            <person name="Manus V."/>
            <person name="Mewes H.-W."/>
            <person name="Miosga T."/>
            <person name="Obermaier B."/>
            <person name="Perea J."/>
            <person name="Pohl T.M."/>
            <person name="Portetelle D."/>
            <person name="Pujol A."/>
            <person name="Purnelle B."/>
            <person name="Ramezani Rad M."/>
            <person name="Rasmussen S.W."/>
            <person name="Rose M."/>
            <person name="Rossau R."/>
            <person name="Schaaff-Gerstenschlaeger I."/>
            <person name="Smits P.H.M."/>
            <person name="Scarcez T."/>
            <person name="Soriano N."/>
            <person name="To Van D."/>
            <person name="Tzermia M."/>
            <person name="Van Broekhoven A."/>
            <person name="Vandenbol M."/>
            <person name="Wedler H."/>
            <person name="von Wettstein D."/>
            <person name="Wambutt R."/>
            <person name="Zagulski M."/>
            <person name="Zollner A."/>
            <person name="Karpfinger-Hartl L."/>
        </authorList>
    </citation>
    <scope>NUCLEOTIDE SEQUENCE [LARGE SCALE GENOMIC DNA]</scope>
    <source>
        <strain>ATCC 204508 / S288c</strain>
    </source>
</reference>
<reference key="3">
    <citation type="journal article" date="2014" name="G3 (Bethesda)">
        <title>The reference genome sequence of Saccharomyces cerevisiae: Then and now.</title>
        <authorList>
            <person name="Engel S.R."/>
            <person name="Dietrich F.S."/>
            <person name="Fisk D.G."/>
            <person name="Binkley G."/>
            <person name="Balakrishnan R."/>
            <person name="Costanzo M.C."/>
            <person name="Dwight S.S."/>
            <person name="Hitz B.C."/>
            <person name="Karra K."/>
            <person name="Nash R.S."/>
            <person name="Weng S."/>
            <person name="Wong E.D."/>
            <person name="Lloyd P."/>
            <person name="Skrzypek M.S."/>
            <person name="Miyasato S.R."/>
            <person name="Simison M."/>
            <person name="Cherry J.M."/>
        </authorList>
    </citation>
    <scope>GENOME REANNOTATION</scope>
    <source>
        <strain>ATCC 204508 / S288c</strain>
    </source>
</reference>
<reference key="4">
    <citation type="journal article" date="2007" name="Genome Res.">
        <title>Approaching a complete repository of sequence-verified protein-encoding clones for Saccharomyces cerevisiae.</title>
        <authorList>
            <person name="Hu Y."/>
            <person name="Rolfs A."/>
            <person name="Bhullar B."/>
            <person name="Murthy T.V.S."/>
            <person name="Zhu C."/>
            <person name="Berger M.F."/>
            <person name="Camargo A.A."/>
            <person name="Kelley F."/>
            <person name="McCarron S."/>
            <person name="Jepson D."/>
            <person name="Richardson A."/>
            <person name="Raphael J."/>
            <person name="Moreira D."/>
            <person name="Taycher E."/>
            <person name="Zuo D."/>
            <person name="Mohr S."/>
            <person name="Kane M.F."/>
            <person name="Williamson J."/>
            <person name="Simpson A.J.G."/>
            <person name="Bulyk M.L."/>
            <person name="Harlow E."/>
            <person name="Marsischky G."/>
            <person name="Kolodner R.D."/>
            <person name="LaBaer J."/>
        </authorList>
    </citation>
    <scope>NUCLEOTIDE SEQUENCE [GENOMIC DNA]</scope>
    <source>
        <strain>ATCC 204508 / S288c</strain>
    </source>
</reference>
<reference key="5">
    <citation type="journal article" date="2000" name="Cell">
        <title>The Isw2 chromatin remodeling complex represses early meiotic genes upon recruitment by Ume6p.</title>
        <authorList>
            <person name="Goldmark J.P."/>
            <person name="Fazzio T.G."/>
            <person name="Estep P.W."/>
            <person name="Church G.M."/>
            <person name="Tsukiyama T."/>
        </authorList>
    </citation>
    <scope>FUNCTION OF THE ISW2 COMPLEX</scope>
</reference>
<reference key="6">
    <citation type="journal article" date="2001" name="J. Bacteriol.">
        <title>The Saccharomyces cerevisiae Isw2p-Itc1p complex represses INO1 expression and maintains cell morphology.</title>
        <authorList>
            <person name="Sugiyama M."/>
            <person name="Nikawa J."/>
        </authorList>
    </citation>
    <scope>FUNCTION OF THE ISW2 COMPLEX</scope>
</reference>
<reference key="7">
    <citation type="journal article" date="2001" name="Mol. Cell. Biol.">
        <title>Interactions of Isw2 chromatin remodeling complex with nucleosomal arrays: analyses using recombinant yeast histones and immobilized templates.</title>
        <authorList>
            <person name="Gelbart M.E."/>
            <person name="Rechsteiner T."/>
            <person name="Richmond T.J."/>
            <person name="Tsukiyama T."/>
        </authorList>
    </citation>
    <scope>FUNCTION OF THE ISW2 COMPLEX</scope>
</reference>
<reference key="8">
    <citation type="journal article" date="2001" name="Mol. Cell. Biol.">
        <title>Widespread collaboration of Isw2 and Sin3-Rpd3 chromatin remodeling complexes in transcriptional repression.</title>
        <authorList>
            <person name="Fazzio T.G."/>
            <person name="Kooperberg C."/>
            <person name="Goldmark J.P."/>
            <person name="Neal C."/>
            <person name="Basom R."/>
            <person name="Delrow J."/>
            <person name="Tsukiyama T."/>
        </authorList>
    </citation>
    <scope>FUNCTION OF THE ISW2 COMPLEX</scope>
</reference>
<reference key="9">
    <citation type="journal article" date="2003" name="Nature">
        <title>Global analysis of protein localization in budding yeast.</title>
        <authorList>
            <person name="Huh W.-K."/>
            <person name="Falvo J.V."/>
            <person name="Gerke L.C."/>
            <person name="Carroll A.S."/>
            <person name="Howson R.W."/>
            <person name="Weissman J.S."/>
            <person name="O'Shea E.K."/>
        </authorList>
    </citation>
    <scope>SUBCELLULAR LOCATION [LARGE SCALE ANALYSIS]</scope>
</reference>
<reference key="10">
    <citation type="journal article" date="2003" name="Nature">
        <title>Global analysis of protein expression in yeast.</title>
        <authorList>
            <person name="Ghaemmaghami S."/>
            <person name="Huh W.-K."/>
            <person name="Bower K."/>
            <person name="Howson R.W."/>
            <person name="Belle A."/>
            <person name="Dephoure N."/>
            <person name="O'Shea E.K."/>
            <person name="Weissman J.S."/>
        </authorList>
    </citation>
    <scope>LEVEL OF PROTEIN EXPRESSION [LARGE SCALE ANALYSIS]</scope>
</reference>
<reference key="11">
    <citation type="journal article" date="2004" name="Mol. Cell. Biol.">
        <title>Noncompetitive counteractions of DNA polymerase epsilon and ISW2/yCHRAC for epigenetic inheritance of telomere position effect in Saccharomyces cerevisiae.</title>
        <authorList>
            <person name="Iida T."/>
            <person name="Araki H."/>
        </authorList>
    </citation>
    <scope>IDENTIFICATION IN THE ISW2 COMPLEX</scope>
    <scope>FUNCTION OF THE ISW2 COMPLEX</scope>
</reference>
<reference key="12">
    <citation type="journal article" date="2004" name="Mol. Cell. Biol.">
        <title>Histone fold protein Dls1p is required for Isw2-dependent chromatin remodeling in vivo.</title>
        <authorList>
            <person name="McConnell A.D."/>
            <person name="Gelbart M.E."/>
            <person name="Tsukiyama T."/>
        </authorList>
    </citation>
    <scope>FUNCTION</scope>
    <scope>IDENTIFICATION IN THE ISW2 COMPLEX</scope>
</reference>
<reference key="13">
    <citation type="journal article" date="2008" name="Mol. Cell. Proteomics">
        <title>A multidimensional chromatography technology for in-depth phosphoproteome analysis.</title>
        <authorList>
            <person name="Albuquerque C.P."/>
            <person name="Smolka M.B."/>
            <person name="Payne S.H."/>
            <person name="Bafna V."/>
            <person name="Eng J."/>
            <person name="Zhou H."/>
        </authorList>
    </citation>
    <scope>PHOSPHORYLATION [LARGE SCALE ANALYSIS] AT SER-17</scope>
    <scope>IDENTIFICATION BY MASS SPECTROMETRY [LARGE SCALE ANALYSIS]</scope>
</reference>
<comment type="function">
    <text evidence="1 2 3 4 7 8">Functions as a component of the ISW2 complex, which acts in remodeling the chromatin by catalyzing an ATP-dependent alteration in the structure of nucleosomal DNA. The ISW2 complex is involved in coordinating transcriptional repression and in inheritance of telomeric silencing. It is involved in repression of MAT a-specific genes, INO1, and early meiotic genes during mitotic growth dependent upon transcription factor UME6 and in a parallel pathway to the RPD3-SIN3 histone deacetylase complex. DLS1 is partially required for the ISW2 complex chromatin remodeling activity and is not required for its interaction with chromatin.</text>
</comment>
<comment type="subunit">
    <text evidence="7 8">Component of the ISW2 complex, which at least consists of ISW2, ITC1, DLS1 and DPB4.</text>
</comment>
<comment type="interaction">
    <interactant intactId="EBI-25910">
        <id>P40366</id>
    </interactant>
    <interactant intactId="EBI-29938">
        <id>Q04603</id>
        <label>DPB4</label>
    </interactant>
    <organismsDiffer>false</organismsDiffer>
    <experiments>4</experiments>
</comment>
<comment type="subcellular location">
    <subcellularLocation>
        <location evidence="5">Nucleus</location>
    </subcellularLocation>
</comment>
<comment type="miscellaneous">
    <text evidence="6">Present with 3390 molecules/cell in log phase SD medium.</text>
</comment>
<evidence type="ECO:0000269" key="1">
    <source>
    </source>
</evidence>
<evidence type="ECO:0000269" key="2">
    <source>
    </source>
</evidence>
<evidence type="ECO:0000269" key="3">
    <source>
    </source>
</evidence>
<evidence type="ECO:0000269" key="4">
    <source>
    </source>
</evidence>
<evidence type="ECO:0000269" key="5">
    <source>
    </source>
</evidence>
<evidence type="ECO:0000269" key="6">
    <source>
    </source>
</evidence>
<evidence type="ECO:0000269" key="7">
    <source>
    </source>
</evidence>
<evidence type="ECO:0000269" key="8">
    <source>
    </source>
</evidence>
<evidence type="ECO:0007744" key="9">
    <source>
    </source>
</evidence>
<gene>
    <name type="primary">DLS1</name>
    <name type="ordered locus">YJL065C</name>
    <name type="ORF">HRD167</name>
    <name type="ORF">J1115</name>
</gene>
<sequence>MNNETSGKETASAPLCSPKLPVEKVQRIAKNDPEYMDTSDDAFVATAFATEFFVQVLTHESLHRQQQQQQQQVPPLPDELTLSYDDISAAIVHSSDGHLQFLNDVIPTTKNLRLLVEENRVRYTTSVMPPNEVYSAYVVNDTAPKPNIVEIDLDNDEDDDEDVTDQE</sequence>
<keyword id="KW-0539">Nucleus</keyword>
<keyword id="KW-0597">Phosphoprotein</keyword>
<keyword id="KW-1185">Reference proteome</keyword>
<keyword id="KW-0804">Transcription</keyword>
<keyword id="KW-0805">Transcription regulation</keyword>
<organism>
    <name type="scientific">Saccharomyces cerevisiae (strain ATCC 204508 / S288c)</name>
    <name type="common">Baker's yeast</name>
    <dbReference type="NCBI Taxonomy" id="559292"/>
    <lineage>
        <taxon>Eukaryota</taxon>
        <taxon>Fungi</taxon>
        <taxon>Dikarya</taxon>
        <taxon>Ascomycota</taxon>
        <taxon>Saccharomycotina</taxon>
        <taxon>Saccharomycetes</taxon>
        <taxon>Saccharomycetales</taxon>
        <taxon>Saccharomycetaceae</taxon>
        <taxon>Saccharomyces</taxon>
    </lineage>
</organism>
<dbReference type="EMBL" id="Z34288">
    <property type="protein sequence ID" value="CAA84059.1"/>
    <property type="molecule type" value="Genomic_DNA"/>
</dbReference>
<dbReference type="EMBL" id="Z49340">
    <property type="protein sequence ID" value="CAA89355.1"/>
    <property type="molecule type" value="Genomic_DNA"/>
</dbReference>
<dbReference type="EMBL" id="AY558557">
    <property type="protein sequence ID" value="AAS56883.1"/>
    <property type="molecule type" value="Genomic_DNA"/>
</dbReference>
<dbReference type="EMBL" id="BK006943">
    <property type="protein sequence ID" value="DAA08733.1"/>
    <property type="molecule type" value="Genomic_DNA"/>
</dbReference>
<dbReference type="PIR" id="S50808">
    <property type="entry name" value="S50808"/>
</dbReference>
<dbReference type="RefSeq" id="NP_012470.1">
    <property type="nucleotide sequence ID" value="NM_001181498.1"/>
</dbReference>
<dbReference type="SMR" id="P40366"/>
<dbReference type="BioGRID" id="33689">
    <property type="interactions" value="128"/>
</dbReference>
<dbReference type="ComplexPortal" id="CPX-728">
    <property type="entry name" value="ISW2 chromatin remodeling complex"/>
</dbReference>
<dbReference type="DIP" id="DIP-1788N"/>
<dbReference type="FunCoup" id="P40366">
    <property type="interactions" value="253"/>
</dbReference>
<dbReference type="IntAct" id="P40366">
    <property type="interactions" value="24"/>
</dbReference>
<dbReference type="MINT" id="P40366"/>
<dbReference type="STRING" id="4932.YJL065C"/>
<dbReference type="iPTMnet" id="P40366"/>
<dbReference type="PaxDb" id="4932-YJL065C"/>
<dbReference type="PeptideAtlas" id="P40366"/>
<dbReference type="EnsemblFungi" id="YJL065C_mRNA">
    <property type="protein sequence ID" value="YJL065C"/>
    <property type="gene ID" value="YJL065C"/>
</dbReference>
<dbReference type="GeneID" id="853381"/>
<dbReference type="KEGG" id="sce:YJL065C"/>
<dbReference type="AGR" id="SGD:S000003601"/>
<dbReference type="SGD" id="S000003601">
    <property type="gene designation" value="DLS1"/>
</dbReference>
<dbReference type="VEuPathDB" id="FungiDB:YJL065C"/>
<dbReference type="eggNOG" id="KOG1658">
    <property type="taxonomic scope" value="Eukaryota"/>
</dbReference>
<dbReference type="HOGENOM" id="CLU_1595845_0_0_1"/>
<dbReference type="InParanoid" id="P40366"/>
<dbReference type="OMA" id="CKKIART"/>
<dbReference type="OrthoDB" id="636685at2759"/>
<dbReference type="BioCyc" id="YEAST:G3O-31526-MONOMER"/>
<dbReference type="Reactome" id="R-SCE-5656169">
    <property type="pathway name" value="Termination of translesion DNA synthesis"/>
</dbReference>
<dbReference type="Reactome" id="R-SCE-6782135">
    <property type="pathway name" value="Dual incision in TC-NER"/>
</dbReference>
<dbReference type="Reactome" id="R-SCE-68952">
    <property type="pathway name" value="DNA replication initiation"/>
</dbReference>
<dbReference type="Reactome" id="R-SCE-68962">
    <property type="pathway name" value="Activation of the pre-replicative complex"/>
</dbReference>
<dbReference type="BioGRID-ORCS" id="853381">
    <property type="hits" value="0 hits in 10 CRISPR screens"/>
</dbReference>
<dbReference type="PRO" id="PR:P40366"/>
<dbReference type="Proteomes" id="UP000002311">
    <property type="component" value="Chromosome X"/>
</dbReference>
<dbReference type="RNAct" id="P40366">
    <property type="molecule type" value="protein"/>
</dbReference>
<dbReference type="GO" id="GO:0008623">
    <property type="term" value="C:CHRAC"/>
    <property type="evidence" value="ECO:0000314"/>
    <property type="project" value="SGD"/>
</dbReference>
<dbReference type="GO" id="GO:0000781">
    <property type="term" value="C:chromosome, telomeric region"/>
    <property type="evidence" value="ECO:0007669"/>
    <property type="project" value="GOC"/>
</dbReference>
<dbReference type="GO" id="GO:0005634">
    <property type="term" value="C:nucleus"/>
    <property type="evidence" value="ECO:0007005"/>
    <property type="project" value="SGD"/>
</dbReference>
<dbReference type="GO" id="GO:0046982">
    <property type="term" value="F:protein heterodimerization activity"/>
    <property type="evidence" value="ECO:0007669"/>
    <property type="project" value="InterPro"/>
</dbReference>
<dbReference type="GO" id="GO:0006338">
    <property type="term" value="P:chromatin remodeling"/>
    <property type="evidence" value="ECO:0000314"/>
    <property type="project" value="ComplexPortal"/>
</dbReference>
<dbReference type="GO" id="GO:0006261">
    <property type="term" value="P:DNA-templated DNA replication"/>
    <property type="evidence" value="ECO:0000318"/>
    <property type="project" value="GO_Central"/>
</dbReference>
<dbReference type="GO" id="GO:1903775">
    <property type="term" value="P:regulation of DNA double-strand break processing"/>
    <property type="evidence" value="ECO:0000315"/>
    <property type="project" value="SGD"/>
</dbReference>
<dbReference type="GO" id="GO:0006355">
    <property type="term" value="P:regulation of DNA-templated transcription"/>
    <property type="evidence" value="ECO:0000303"/>
    <property type="project" value="ComplexPortal"/>
</dbReference>
<dbReference type="GO" id="GO:0031509">
    <property type="term" value="P:subtelomeric heterochromatin formation"/>
    <property type="evidence" value="ECO:0000315"/>
    <property type="project" value="SGD"/>
</dbReference>
<dbReference type="CDD" id="cd22929">
    <property type="entry name" value="HFD_POLE4-like"/>
    <property type="match status" value="1"/>
</dbReference>
<dbReference type="Gene3D" id="1.10.20.10">
    <property type="entry name" value="Histone, subunit A"/>
    <property type="match status" value="1"/>
</dbReference>
<dbReference type="InterPro" id="IPR009072">
    <property type="entry name" value="Histone-fold"/>
</dbReference>
<dbReference type="InterPro" id="IPR050568">
    <property type="entry name" value="Transcr_DNA_Rep_Reg"/>
</dbReference>
<dbReference type="PANTHER" id="PTHR10252:SF54">
    <property type="entry name" value="CHROMATIN ACCESSIBILITY COMPLEX PROTEIN 1"/>
    <property type="match status" value="1"/>
</dbReference>
<dbReference type="PANTHER" id="PTHR10252">
    <property type="entry name" value="HISTONE-LIKE TRANSCRIPTION FACTOR CCAAT-RELATED"/>
    <property type="match status" value="1"/>
</dbReference>
<dbReference type="SUPFAM" id="SSF47113">
    <property type="entry name" value="Histone-fold"/>
    <property type="match status" value="1"/>
</dbReference>
<accession>P40366</accession>
<accession>D6VWB7</accession>
<proteinExistence type="evidence at protein level"/>
<name>DLS1_YEAST</name>
<protein>
    <recommendedName>
        <fullName>Protein DLS1</fullName>
    </recommendedName>
    <alternativeName>
        <fullName>DPB3-like subunit of ISW2 complex 1</fullName>
    </alternativeName>
</protein>